<organism>
    <name type="scientific">Bos taurus</name>
    <name type="common">Bovine</name>
    <dbReference type="NCBI Taxonomy" id="9913"/>
    <lineage>
        <taxon>Eukaryota</taxon>
        <taxon>Metazoa</taxon>
        <taxon>Chordata</taxon>
        <taxon>Craniata</taxon>
        <taxon>Vertebrata</taxon>
        <taxon>Euteleostomi</taxon>
        <taxon>Mammalia</taxon>
        <taxon>Eutheria</taxon>
        <taxon>Laurasiatheria</taxon>
        <taxon>Artiodactyla</taxon>
        <taxon>Ruminantia</taxon>
        <taxon>Pecora</taxon>
        <taxon>Bovidae</taxon>
        <taxon>Bovinae</taxon>
        <taxon>Bos</taxon>
    </lineage>
</organism>
<proteinExistence type="evidence at protein level"/>
<sequence>MNPIIFIIILLTIMLGTIIVMISSHWLLVWIGFEMNMLAIIPIMMKNHNPRATEASTKYFLTQSTASMLLMMAVIINLMFSGQWTVMKLFNPMASMLMTMALAMKLGMAPFHFWVPEVTQGIPLSSGLILLTWQKLAPMSVLYQIFPSINLNLILTLSVLSILIGGWGGLNQTQLRKIMAYSSIAHMGWMTAVLPYNPTMTLLNLIIYIIMTSTMFTMFMANSTTTTLSLSHTWNKTPIMTVLILATLLSMGGLPPLSGFMPKWMIIQEMTKNNSIILPTFMAITALLNLYFYMRLTYSTTLTMFPSTNNMKMKWQFPLMKKMTFLPTMVVLSTMMLPLTPMLSVLE</sequence>
<accession>P03892</accession>
<accession>Q8SFW9</accession>
<reference key="1">
    <citation type="journal article" date="1982" name="J. Mol. Biol.">
        <title>Complete sequence of bovine mitochondrial DNA. Conserved features of the mammalian mitochondrial genome.</title>
        <authorList>
            <person name="Anderson S."/>
            <person name="de Bruijn M.H.L."/>
            <person name="Coulson A.R."/>
            <person name="Eperon I.C."/>
            <person name="Sanger F."/>
            <person name="Young I.G."/>
        </authorList>
    </citation>
    <scope>NUCLEOTIDE SEQUENCE [GENOMIC DNA]</scope>
    <source>
        <strain evidence="6">Hereford</strain>
        <tissue>Heart</tissue>
    </source>
</reference>
<reference key="2">
    <citation type="submission" date="2002-03" db="EMBL/GenBank/DDBJ databases">
        <title>Bos taurus mitochondrial protein coding regions.</title>
        <authorList>
            <person name="Wettstein P.J."/>
        </authorList>
    </citation>
    <scope>NUCLEOTIDE SEQUENCE [GENOMIC DNA]</scope>
    <source>
        <strain>65</strain>
        <strain>66</strain>
        <strain>D</strain>
        <strain>F</strain>
    </source>
</reference>
<reference key="3">
    <citation type="journal article" date="2006" name="Proc. Natl. Acad. Sci. U.S.A.">
        <title>Definition of the mitochondrial proteome by measurement of molecular masses of membrane proteins.</title>
        <authorList>
            <person name="Carroll J."/>
            <person name="Fearnley I.M."/>
            <person name="Walker J.E."/>
        </authorList>
    </citation>
    <scope>SUBCELLULAR LOCATION</scope>
    <scope>FORMYLATION AT MET-1</scope>
    <scope>MASS SPECTROMETRY</scope>
</reference>
<reference key="4">
    <citation type="journal article" date="2014" name="Nature">
        <title>Architecture of mammalian respiratory complex I.</title>
        <authorList>
            <person name="Vinothkumar K.R."/>
            <person name="Zhu J."/>
            <person name="Hirst J."/>
        </authorList>
    </citation>
    <scope>SUBUNIT</scope>
    <scope>SUBCELLULAR LOCATION</scope>
</reference>
<comment type="function">
    <text evidence="1">Core subunit of the mitochondrial membrane respiratory chain NADH dehydrogenase (Complex I) which catalyzes electron transfer from NADH through the respiratory chain, using ubiquinone as an electron acceptor. Essential for the catalytic activity and assembly of complex I.</text>
</comment>
<comment type="catalytic activity">
    <reaction evidence="1">
        <text>a ubiquinone + NADH + 5 H(+)(in) = a ubiquinol + NAD(+) + 4 H(+)(out)</text>
        <dbReference type="Rhea" id="RHEA:29091"/>
        <dbReference type="Rhea" id="RHEA-COMP:9565"/>
        <dbReference type="Rhea" id="RHEA-COMP:9566"/>
        <dbReference type="ChEBI" id="CHEBI:15378"/>
        <dbReference type="ChEBI" id="CHEBI:16389"/>
        <dbReference type="ChEBI" id="CHEBI:17976"/>
        <dbReference type="ChEBI" id="CHEBI:57540"/>
        <dbReference type="ChEBI" id="CHEBI:57945"/>
        <dbReference type="EC" id="7.1.1.2"/>
    </reaction>
</comment>
<comment type="subunit">
    <text evidence="1 4">Core subunit of respiratory chain NADH dehydrogenase (Complex I) which is composed of 45 different subunits. Interacts with TMEM242 (By similarity).</text>
</comment>
<comment type="subcellular location">
    <subcellularLocation>
        <location evidence="3 4">Mitochondrion inner membrane</location>
        <topology evidence="2">Multi-pass membrane protein</topology>
    </subcellularLocation>
</comment>
<comment type="mass spectrometry"/>
<comment type="similarity">
    <text evidence="5">Belongs to the complex I subunit 2 family.</text>
</comment>
<evidence type="ECO:0000250" key="1">
    <source>
        <dbReference type="UniProtKB" id="P03891"/>
    </source>
</evidence>
<evidence type="ECO:0000255" key="2"/>
<evidence type="ECO:0000269" key="3">
    <source>
    </source>
</evidence>
<evidence type="ECO:0000269" key="4">
    <source>
    </source>
</evidence>
<evidence type="ECO:0000305" key="5"/>
<evidence type="ECO:0000312" key="6">
    <source>
        <dbReference type="Proteomes" id="UP000009136"/>
    </source>
</evidence>
<evidence type="ECO:0007829" key="7">
    <source>
        <dbReference type="PDB" id="7QSM"/>
    </source>
</evidence>
<evidence type="ECO:0007829" key="8">
    <source>
        <dbReference type="PDB" id="7QSN"/>
    </source>
</evidence>
<evidence type="ECO:0007829" key="9">
    <source>
        <dbReference type="PDB" id="8Q0M"/>
    </source>
</evidence>
<protein>
    <recommendedName>
        <fullName evidence="1">NADH-ubiquinone oxidoreductase chain 2</fullName>
        <ecNumber evidence="1">7.1.1.2</ecNumber>
    </recommendedName>
    <alternativeName>
        <fullName>NADH dehydrogenase subunit 2</fullName>
    </alternativeName>
</protein>
<dbReference type="EC" id="7.1.1.2" evidence="1"/>
<dbReference type="EMBL" id="V00654">
    <property type="protein sequence ID" value="CAA23998.1"/>
    <property type="molecule type" value="Genomic_DNA"/>
</dbReference>
<dbReference type="EMBL" id="AF490528">
    <property type="protein sequence ID" value="AAM08323.1"/>
    <property type="molecule type" value="Genomic_DNA"/>
</dbReference>
<dbReference type="EMBL" id="AF490529">
    <property type="protein sequence ID" value="AAM08336.1"/>
    <property type="molecule type" value="Genomic_DNA"/>
</dbReference>
<dbReference type="EMBL" id="AF493541">
    <property type="protein sequence ID" value="AAM12790.1"/>
    <property type="molecule type" value="Genomic_DNA"/>
</dbReference>
<dbReference type="EMBL" id="AF493542">
    <property type="protein sequence ID" value="AAM12803.1"/>
    <property type="molecule type" value="Genomic_DNA"/>
</dbReference>
<dbReference type="PIR" id="A00415">
    <property type="entry name" value="QXBO2M"/>
</dbReference>
<dbReference type="PDB" id="5LC5">
    <property type="method" value="EM"/>
    <property type="resolution" value="4.35 A"/>
    <property type="chains" value="N=2-345"/>
</dbReference>
<dbReference type="PDB" id="5LDW">
    <property type="method" value="EM"/>
    <property type="resolution" value="4.27 A"/>
    <property type="chains" value="N=1-347"/>
</dbReference>
<dbReference type="PDB" id="5LDX">
    <property type="method" value="EM"/>
    <property type="resolution" value="5.60 A"/>
    <property type="chains" value="N=1-347"/>
</dbReference>
<dbReference type="PDB" id="5O31">
    <property type="method" value="EM"/>
    <property type="resolution" value="4.13 A"/>
    <property type="chains" value="N=1-347"/>
</dbReference>
<dbReference type="PDB" id="7DGQ">
    <property type="method" value="EM"/>
    <property type="resolution" value="5.00 A"/>
    <property type="chains" value="2=1-347"/>
</dbReference>
<dbReference type="PDB" id="7DGR">
    <property type="method" value="EM"/>
    <property type="resolution" value="4.60 A"/>
    <property type="chains" value="2=1-347"/>
</dbReference>
<dbReference type="PDB" id="7DGS">
    <property type="method" value="EM"/>
    <property type="resolution" value="7.80 A"/>
    <property type="chains" value="2=1-347"/>
</dbReference>
<dbReference type="PDB" id="7DGZ">
    <property type="method" value="EM"/>
    <property type="resolution" value="3.80 A"/>
    <property type="chains" value="2=1-347"/>
</dbReference>
<dbReference type="PDB" id="7DH0">
    <property type="method" value="EM"/>
    <property type="resolution" value="4.20 A"/>
    <property type="chains" value="2=1-347"/>
</dbReference>
<dbReference type="PDB" id="7DKF">
    <property type="method" value="EM"/>
    <property type="resolution" value="8.30 A"/>
    <property type="chains" value="22=1-347"/>
</dbReference>
<dbReference type="PDB" id="7QSD">
    <property type="method" value="EM"/>
    <property type="resolution" value="3.10 A"/>
    <property type="chains" value="N=1-347"/>
</dbReference>
<dbReference type="PDB" id="7QSK">
    <property type="method" value="EM"/>
    <property type="resolution" value="2.84 A"/>
    <property type="chains" value="N=1-347"/>
</dbReference>
<dbReference type="PDB" id="7QSL">
    <property type="method" value="EM"/>
    <property type="resolution" value="2.76 A"/>
    <property type="chains" value="N=1-347"/>
</dbReference>
<dbReference type="PDB" id="7QSM">
    <property type="method" value="EM"/>
    <property type="resolution" value="2.30 A"/>
    <property type="chains" value="N=1-347"/>
</dbReference>
<dbReference type="PDB" id="7QSN">
    <property type="method" value="EM"/>
    <property type="resolution" value="2.81 A"/>
    <property type="chains" value="N=1-347"/>
</dbReference>
<dbReference type="PDB" id="7QSO">
    <property type="method" value="EM"/>
    <property type="resolution" value="3.02 A"/>
    <property type="chains" value="N=1-347"/>
</dbReference>
<dbReference type="PDB" id="7R41">
    <property type="method" value="EM"/>
    <property type="resolution" value="2.30 A"/>
    <property type="chains" value="N=1-347"/>
</dbReference>
<dbReference type="PDB" id="7R42">
    <property type="method" value="EM"/>
    <property type="resolution" value="2.30 A"/>
    <property type="chains" value="N=1-347"/>
</dbReference>
<dbReference type="PDB" id="7R43">
    <property type="method" value="EM"/>
    <property type="resolution" value="2.40 A"/>
    <property type="chains" value="N=1-347"/>
</dbReference>
<dbReference type="PDB" id="7R44">
    <property type="method" value="EM"/>
    <property type="resolution" value="2.40 A"/>
    <property type="chains" value="N=1-347"/>
</dbReference>
<dbReference type="PDB" id="7R45">
    <property type="method" value="EM"/>
    <property type="resolution" value="2.40 A"/>
    <property type="chains" value="N=1-347"/>
</dbReference>
<dbReference type="PDB" id="7R46">
    <property type="method" value="EM"/>
    <property type="resolution" value="2.40 A"/>
    <property type="chains" value="N=1-347"/>
</dbReference>
<dbReference type="PDB" id="7R47">
    <property type="method" value="EM"/>
    <property type="resolution" value="2.30 A"/>
    <property type="chains" value="N=1-347"/>
</dbReference>
<dbReference type="PDB" id="7R48">
    <property type="method" value="EM"/>
    <property type="resolution" value="2.30 A"/>
    <property type="chains" value="N=1-347"/>
</dbReference>
<dbReference type="PDB" id="7R4C">
    <property type="method" value="EM"/>
    <property type="resolution" value="2.30 A"/>
    <property type="chains" value="N=1-347"/>
</dbReference>
<dbReference type="PDB" id="7R4D">
    <property type="method" value="EM"/>
    <property type="resolution" value="2.30 A"/>
    <property type="chains" value="N=1-347"/>
</dbReference>
<dbReference type="PDB" id="7R4F">
    <property type="method" value="EM"/>
    <property type="resolution" value="2.40 A"/>
    <property type="chains" value="N=1-347"/>
</dbReference>
<dbReference type="PDB" id="7R4G">
    <property type="method" value="EM"/>
    <property type="resolution" value="2.50 A"/>
    <property type="chains" value="N=1-347"/>
</dbReference>
<dbReference type="PDB" id="8Q0A">
    <property type="method" value="EM"/>
    <property type="resolution" value="3.10 A"/>
    <property type="chains" value="N=1-347"/>
</dbReference>
<dbReference type="PDB" id="8Q0F">
    <property type="method" value="EM"/>
    <property type="resolution" value="3.10 A"/>
    <property type="chains" value="N=1-347"/>
</dbReference>
<dbReference type="PDB" id="8Q0J">
    <property type="method" value="EM"/>
    <property type="resolution" value="3.80 A"/>
    <property type="chains" value="N=1-347"/>
</dbReference>
<dbReference type="PDB" id="8Q0M">
    <property type="method" value="EM"/>
    <property type="resolution" value="3.10 A"/>
    <property type="chains" value="N=1-347"/>
</dbReference>
<dbReference type="PDB" id="8Q0O">
    <property type="method" value="EM"/>
    <property type="resolution" value="3.10 A"/>
    <property type="chains" value="N=1-347"/>
</dbReference>
<dbReference type="PDB" id="8Q0Q">
    <property type="method" value="EM"/>
    <property type="resolution" value="3.60 A"/>
    <property type="chains" value="N=1-347"/>
</dbReference>
<dbReference type="PDB" id="8Q1P">
    <property type="method" value="EM"/>
    <property type="resolution" value="2.90 A"/>
    <property type="chains" value="N=1-347"/>
</dbReference>
<dbReference type="PDB" id="8Q1U">
    <property type="method" value="EM"/>
    <property type="resolution" value="3.30 A"/>
    <property type="chains" value="N=1-347"/>
</dbReference>
<dbReference type="PDB" id="8Q1Y">
    <property type="method" value="EM"/>
    <property type="resolution" value="2.60 A"/>
    <property type="chains" value="N=1-347"/>
</dbReference>
<dbReference type="PDB" id="8Q25">
    <property type="method" value="EM"/>
    <property type="resolution" value="2.80 A"/>
    <property type="chains" value="N=1-347"/>
</dbReference>
<dbReference type="PDB" id="8Q45">
    <property type="method" value="EM"/>
    <property type="resolution" value="2.70 A"/>
    <property type="chains" value="N=1-347"/>
</dbReference>
<dbReference type="PDB" id="8Q46">
    <property type="method" value="EM"/>
    <property type="resolution" value="2.60 A"/>
    <property type="chains" value="N=1-347"/>
</dbReference>
<dbReference type="PDB" id="8Q47">
    <property type="method" value="EM"/>
    <property type="resolution" value="2.90 A"/>
    <property type="chains" value="N=1-347"/>
</dbReference>
<dbReference type="PDB" id="8Q48">
    <property type="method" value="EM"/>
    <property type="resolution" value="2.50 A"/>
    <property type="chains" value="N=1-347"/>
</dbReference>
<dbReference type="PDB" id="8Q49">
    <property type="method" value="EM"/>
    <property type="resolution" value="2.60 A"/>
    <property type="chains" value="N=1-347"/>
</dbReference>
<dbReference type="PDB" id="8Q4A">
    <property type="method" value="EM"/>
    <property type="resolution" value="2.60 A"/>
    <property type="chains" value="N=1-347"/>
</dbReference>
<dbReference type="PDBsum" id="5LC5"/>
<dbReference type="PDBsum" id="5LDW"/>
<dbReference type="PDBsum" id="5LDX"/>
<dbReference type="PDBsum" id="5O31"/>
<dbReference type="PDBsum" id="7DGQ"/>
<dbReference type="PDBsum" id="7DGR"/>
<dbReference type="PDBsum" id="7DGS"/>
<dbReference type="PDBsum" id="7DGZ"/>
<dbReference type="PDBsum" id="7DH0"/>
<dbReference type="PDBsum" id="7DKF"/>
<dbReference type="PDBsum" id="7QSD"/>
<dbReference type="PDBsum" id="7QSK"/>
<dbReference type="PDBsum" id="7QSL"/>
<dbReference type="PDBsum" id="7QSM"/>
<dbReference type="PDBsum" id="7QSN"/>
<dbReference type="PDBsum" id="7QSO"/>
<dbReference type="PDBsum" id="7R41"/>
<dbReference type="PDBsum" id="7R42"/>
<dbReference type="PDBsum" id="7R43"/>
<dbReference type="PDBsum" id="7R44"/>
<dbReference type="PDBsum" id="7R45"/>
<dbReference type="PDBsum" id="7R46"/>
<dbReference type="PDBsum" id="7R47"/>
<dbReference type="PDBsum" id="7R48"/>
<dbReference type="PDBsum" id="7R4C"/>
<dbReference type="PDBsum" id="7R4D"/>
<dbReference type="PDBsum" id="7R4F"/>
<dbReference type="PDBsum" id="7R4G"/>
<dbReference type="PDBsum" id="8Q0A"/>
<dbReference type="PDBsum" id="8Q0F"/>
<dbReference type="PDBsum" id="8Q0J"/>
<dbReference type="PDBsum" id="8Q0M"/>
<dbReference type="PDBsum" id="8Q0O"/>
<dbReference type="PDBsum" id="8Q0Q"/>
<dbReference type="PDBsum" id="8Q1P"/>
<dbReference type="PDBsum" id="8Q1U"/>
<dbReference type="PDBsum" id="8Q1Y"/>
<dbReference type="PDBsum" id="8Q25"/>
<dbReference type="PDBsum" id="8Q45"/>
<dbReference type="PDBsum" id="8Q46"/>
<dbReference type="PDBsum" id="8Q47"/>
<dbReference type="PDBsum" id="8Q48"/>
<dbReference type="PDBsum" id="8Q49"/>
<dbReference type="PDBsum" id="8Q4A"/>
<dbReference type="EMDB" id="EMD-18051"/>
<dbReference type="EMDB" id="EMD-18052"/>
<dbReference type="EMDB" id="EMD-18054"/>
<dbReference type="EMDB" id="EMD-18055"/>
<dbReference type="EMDB" id="EMD-18057"/>
<dbReference type="EMDB" id="EMD-18059"/>
<dbReference type="EMDB" id="EMD-18066"/>
<dbReference type="EMDB" id="EMD-18067"/>
<dbReference type="EMDB" id="EMD-18068"/>
<dbReference type="EMDB" id="EMD-18069"/>
<dbReference type="EMDB" id="EMD-18138"/>
<dbReference type="EMDB" id="EMD-18139"/>
<dbReference type="EMDB" id="EMD-18140"/>
<dbReference type="EMDB" id="EMD-18141"/>
<dbReference type="EMDB" id="EMD-18142"/>
<dbReference type="EMDB" id="EMD-18143"/>
<dbReference type="EMDB" id="EMD-30673"/>
<dbReference type="EMDB" id="EMD-30676"/>
<dbReference type="EMDB" id="EMD-3731"/>
<dbReference type="EMDB" id="EMD-4032"/>
<dbReference type="EMDB" id="EMD-4040"/>
<dbReference type="EMDB" id="EMD-4041"/>
<dbReference type="SMR" id="P03892"/>
<dbReference type="CORUM" id="P03892"/>
<dbReference type="DIP" id="DIP-38799N"/>
<dbReference type="FunCoup" id="P03892">
    <property type="interactions" value="125"/>
</dbReference>
<dbReference type="IntAct" id="P03892">
    <property type="interactions" value="1"/>
</dbReference>
<dbReference type="STRING" id="9913.ENSBTAP00000053160"/>
<dbReference type="ChEMBL" id="CHEMBL2112"/>
<dbReference type="TCDB" id="3.D.1.6.1">
    <property type="family name" value="the h+ or na+-translocating nadh dehydrogenase (ndh) family"/>
</dbReference>
<dbReference type="PaxDb" id="9913-ENSBTAP00000053160"/>
<dbReference type="eggNOG" id="KOG4668">
    <property type="taxonomic scope" value="Eukaryota"/>
</dbReference>
<dbReference type="InParanoid" id="P03892"/>
<dbReference type="Proteomes" id="UP000009136">
    <property type="component" value="Mitochondrion MT"/>
</dbReference>
<dbReference type="Proteomes" id="UP000009136">
    <property type="component" value="Unassembled WGS sequence"/>
</dbReference>
<dbReference type="GO" id="GO:0005743">
    <property type="term" value="C:mitochondrial inner membrane"/>
    <property type="evidence" value="ECO:0000314"/>
    <property type="project" value="UniProtKB"/>
</dbReference>
<dbReference type="GO" id="GO:0045271">
    <property type="term" value="C:respiratory chain complex I"/>
    <property type="evidence" value="ECO:0000314"/>
    <property type="project" value="UniProtKB"/>
</dbReference>
<dbReference type="GO" id="GO:0008137">
    <property type="term" value="F:NADH dehydrogenase (ubiquinone) activity"/>
    <property type="evidence" value="ECO:0000250"/>
    <property type="project" value="UniProtKB"/>
</dbReference>
<dbReference type="GO" id="GO:0006120">
    <property type="term" value="P:mitochondrial electron transport, NADH to ubiquinone"/>
    <property type="evidence" value="ECO:0000250"/>
    <property type="project" value="UniProtKB"/>
</dbReference>
<dbReference type="GO" id="GO:0032981">
    <property type="term" value="P:mitochondrial respiratory chain complex I assembly"/>
    <property type="evidence" value="ECO:0000250"/>
    <property type="project" value="UniProtKB"/>
</dbReference>
<dbReference type="InterPro" id="IPR050175">
    <property type="entry name" value="Complex_I_Subunit_2"/>
</dbReference>
<dbReference type="InterPro" id="IPR010933">
    <property type="entry name" value="NADH_DH_su2_C"/>
</dbReference>
<dbReference type="InterPro" id="IPR003917">
    <property type="entry name" value="NADH_UbQ_OxRdtase_chain2"/>
</dbReference>
<dbReference type="InterPro" id="IPR001750">
    <property type="entry name" value="ND/Mrp_TM"/>
</dbReference>
<dbReference type="PANTHER" id="PTHR46552">
    <property type="entry name" value="NADH-UBIQUINONE OXIDOREDUCTASE CHAIN 2"/>
    <property type="match status" value="1"/>
</dbReference>
<dbReference type="PANTHER" id="PTHR46552:SF1">
    <property type="entry name" value="NADH-UBIQUINONE OXIDOREDUCTASE CHAIN 2"/>
    <property type="match status" value="1"/>
</dbReference>
<dbReference type="Pfam" id="PF06444">
    <property type="entry name" value="NADH_dehy_S2_C"/>
    <property type="match status" value="1"/>
</dbReference>
<dbReference type="Pfam" id="PF00361">
    <property type="entry name" value="Proton_antipo_M"/>
    <property type="match status" value="1"/>
</dbReference>
<dbReference type="PRINTS" id="PR01436">
    <property type="entry name" value="NADHDHGNASE2"/>
</dbReference>
<gene>
    <name evidence="1" type="primary">MT-ND2</name>
    <name type="synonym">MTND2</name>
    <name type="synonym">NADH2</name>
    <name type="synonym">ND2</name>
</gene>
<feature type="chain" id="PRO_0000117559" description="NADH-ubiquinone oxidoreductase chain 2">
    <location>
        <begin position="1"/>
        <end position="347"/>
    </location>
</feature>
<feature type="transmembrane region" description="Helical" evidence="2">
    <location>
        <begin position="3"/>
        <end position="23"/>
    </location>
</feature>
<feature type="transmembrane region" description="Helical" evidence="2">
    <location>
        <begin position="25"/>
        <end position="45"/>
    </location>
</feature>
<feature type="transmembrane region" description="Helical" evidence="2">
    <location>
        <begin position="67"/>
        <end position="87"/>
    </location>
</feature>
<feature type="transmembrane region" description="Helical" evidence="2">
    <location>
        <begin position="96"/>
        <end position="116"/>
    </location>
</feature>
<feature type="transmembrane region" description="Helical" evidence="2">
    <location>
        <begin position="122"/>
        <end position="142"/>
    </location>
</feature>
<feature type="transmembrane region" description="Helical" evidence="2">
    <location>
        <begin position="145"/>
        <end position="165"/>
    </location>
</feature>
<feature type="transmembrane region" description="Helical" evidence="2">
    <location>
        <begin position="178"/>
        <end position="198"/>
    </location>
</feature>
<feature type="transmembrane region" description="Helical" evidence="2">
    <location>
        <begin position="200"/>
        <end position="220"/>
    </location>
</feature>
<feature type="transmembrane region" description="Helical" evidence="2">
    <location>
        <begin position="239"/>
        <end position="259"/>
    </location>
</feature>
<feature type="transmembrane region" description="Helical" evidence="2">
    <location>
        <begin position="274"/>
        <end position="294"/>
    </location>
</feature>
<feature type="transmembrane region" description="Helical" evidence="2">
    <location>
        <begin position="325"/>
        <end position="345"/>
    </location>
</feature>
<feature type="modified residue" description="N-formylmethionine" evidence="3">
    <location>
        <position position="1"/>
    </location>
</feature>
<feature type="sequence variant" description="In strain: F.">
    <original>T</original>
    <variation>I</variation>
    <location>
        <position position="227"/>
    </location>
</feature>
<feature type="helix" evidence="7">
    <location>
        <begin position="3"/>
        <end position="22"/>
    </location>
</feature>
<feature type="helix" evidence="7">
    <location>
        <begin position="26"/>
        <end position="45"/>
    </location>
</feature>
<feature type="helix" evidence="7">
    <location>
        <begin position="50"/>
        <end position="81"/>
    </location>
</feature>
<feature type="strand" evidence="7">
    <location>
        <begin position="85"/>
        <end position="88"/>
    </location>
</feature>
<feature type="helix" evidence="7">
    <location>
        <begin position="92"/>
        <end position="106"/>
    </location>
</feature>
<feature type="turn" evidence="8">
    <location>
        <begin position="109"/>
        <end position="113"/>
    </location>
</feature>
<feature type="helix" evidence="7">
    <location>
        <begin position="114"/>
        <end position="120"/>
    </location>
</feature>
<feature type="helix" evidence="7">
    <location>
        <begin position="124"/>
        <end position="131"/>
    </location>
</feature>
<feature type="helix" evidence="7">
    <location>
        <begin position="133"/>
        <end position="135"/>
    </location>
</feature>
<feature type="helix" evidence="7">
    <location>
        <begin position="136"/>
        <end position="145"/>
    </location>
</feature>
<feature type="helix" evidence="7">
    <location>
        <begin position="146"/>
        <end position="148"/>
    </location>
</feature>
<feature type="helix" evidence="7">
    <location>
        <begin position="151"/>
        <end position="170"/>
    </location>
</feature>
<feature type="helix" evidence="7">
    <location>
        <begin position="175"/>
        <end position="193"/>
    </location>
</feature>
<feature type="turn" evidence="7">
    <location>
        <begin position="194"/>
        <end position="196"/>
    </location>
</feature>
<feature type="helix" evidence="7">
    <location>
        <begin position="198"/>
        <end position="221"/>
    </location>
</feature>
<feature type="helix" evidence="7">
    <location>
        <begin position="227"/>
        <end position="230"/>
    </location>
</feature>
<feature type="helix" evidence="7">
    <location>
        <begin position="231"/>
        <end position="235"/>
    </location>
</feature>
<feature type="helix" evidence="7">
    <location>
        <begin position="238"/>
        <end position="251"/>
    </location>
</feature>
<feature type="helix" evidence="7">
    <location>
        <begin position="260"/>
        <end position="272"/>
    </location>
</feature>
<feature type="helix" evidence="7">
    <location>
        <begin position="277"/>
        <end position="285"/>
    </location>
</feature>
<feature type="helix" evidence="7">
    <location>
        <begin position="287"/>
        <end position="300"/>
    </location>
</feature>
<feature type="strand" evidence="9">
    <location>
        <begin position="307"/>
        <end position="309"/>
    </location>
</feature>
<feature type="helix" evidence="7">
    <location>
        <begin position="311"/>
        <end position="314"/>
    </location>
</feature>
<feature type="helix" evidence="7">
    <location>
        <begin position="326"/>
        <end position="334"/>
    </location>
</feature>
<feature type="helix" evidence="7">
    <location>
        <begin position="337"/>
        <end position="346"/>
    </location>
</feature>
<geneLocation type="mitochondrion"/>
<name>NU2M_BOVIN</name>
<keyword id="KW-0002">3D-structure</keyword>
<keyword id="KW-0249">Electron transport</keyword>
<keyword id="KW-0291">Formylation</keyword>
<keyword id="KW-0472">Membrane</keyword>
<keyword id="KW-0496">Mitochondrion</keyword>
<keyword id="KW-0999">Mitochondrion inner membrane</keyword>
<keyword id="KW-0520">NAD</keyword>
<keyword id="KW-1185">Reference proteome</keyword>
<keyword id="KW-0679">Respiratory chain</keyword>
<keyword id="KW-1278">Translocase</keyword>
<keyword id="KW-0812">Transmembrane</keyword>
<keyword id="KW-1133">Transmembrane helix</keyword>
<keyword id="KW-0813">Transport</keyword>
<keyword id="KW-0830">Ubiquinone</keyword>